<organism>
    <name type="scientific">Mus musculus</name>
    <name type="common">Mouse</name>
    <dbReference type="NCBI Taxonomy" id="10090"/>
    <lineage>
        <taxon>Eukaryota</taxon>
        <taxon>Metazoa</taxon>
        <taxon>Chordata</taxon>
        <taxon>Craniata</taxon>
        <taxon>Vertebrata</taxon>
        <taxon>Euteleostomi</taxon>
        <taxon>Mammalia</taxon>
        <taxon>Eutheria</taxon>
        <taxon>Euarchontoglires</taxon>
        <taxon>Glires</taxon>
        <taxon>Rodentia</taxon>
        <taxon>Myomorpha</taxon>
        <taxon>Muroidea</taxon>
        <taxon>Muridae</taxon>
        <taxon>Murinae</taxon>
        <taxon>Mus</taxon>
        <taxon>Mus</taxon>
    </lineage>
</organism>
<proteinExistence type="evidence at protein level"/>
<feature type="initiator methionine" description="Removed" evidence="2">
    <location>
        <position position="1"/>
    </location>
</feature>
<feature type="chain" id="PRO_0000253788" description="Protein lin-28 homolog A">
    <location>
        <begin position="2"/>
        <end position="209"/>
    </location>
</feature>
<feature type="domain" description="CSD">
    <location>
        <begin position="39"/>
        <end position="112"/>
    </location>
</feature>
<feature type="zinc finger region" description="CCHC-type 1" evidence="3">
    <location>
        <begin position="137"/>
        <end position="154"/>
    </location>
</feature>
<feature type="zinc finger region" description="CCHC-type 2" evidence="3">
    <location>
        <begin position="159"/>
        <end position="176"/>
    </location>
</feature>
<feature type="region of interest" description="Disordered" evidence="4">
    <location>
        <begin position="1"/>
        <end position="31"/>
    </location>
</feature>
<feature type="region of interest" description="Flexible linker">
    <location>
        <begin position="113"/>
        <end position="136"/>
    </location>
</feature>
<feature type="region of interest" description="Disordered" evidence="4">
    <location>
        <begin position="177"/>
        <end position="209"/>
    </location>
</feature>
<feature type="modified residue" description="N-acetylglycine" evidence="2">
    <location>
        <position position="2"/>
    </location>
</feature>
<feature type="modified residue" description="Phosphoserine" evidence="2">
    <location>
        <position position="3"/>
    </location>
</feature>
<feature type="modified residue" description="Phosphoserine" evidence="2">
    <location>
        <position position="120"/>
    </location>
</feature>
<feature type="modified residue" description="Phosphoserine" evidence="2">
    <location>
        <position position="200"/>
    </location>
</feature>
<feature type="mutagenesis site" description="Erroneous subcellular location. No positive effect on terminal myogenic differentiation." evidence="11">
    <original>G</original>
    <variation>S</variation>
    <location>
        <position position="42"/>
    </location>
</feature>
<feature type="mutagenesis site" description="Erroneous subcellular location. No positive effect on terminal myogenic differentiation." evidence="11">
    <location>
        <begin position="44"/>
        <end position="47"/>
    </location>
</feature>
<feature type="mutagenesis site" description="Erroneous subcellular location; when associated with Q-85. No positive effect on terminal myogenic differentiation; when associated with Q-85." evidence="11">
    <original>M</original>
    <variation>I</variation>
    <location>
        <position position="81"/>
    </location>
</feature>
<feature type="mutagenesis site" description="Erroneous subcellular location; when associated with I-81. No positive effect on terminal myogenic differentiation; when associated with I-81." evidence="11">
    <original>R</original>
    <variation>Q</variation>
    <location>
        <position position="85"/>
    </location>
</feature>
<feature type="mutagenesis site" description="Erroneous subcellular location; when associated with S-124. No positive effect on terminal myogenic differentiation; when associated with S-124." evidence="11">
    <original>G</original>
    <variation>R</variation>
    <location>
        <position position="119"/>
    </location>
</feature>
<feature type="mutagenesis site" description="Erroneous subcellular location; when associated with R-119. No positive effect on terminal myogenic differentiation; when associated with R-119." evidence="11">
    <original>P</original>
    <variation>S</variation>
    <location>
        <position position="124"/>
    </location>
</feature>
<feature type="mutagenesis site" description="No effect on subcellular location; when associated with S-142. Normal terminal myogenic differentiation; when associated with S-142." evidence="11">
    <location>
        <begin position="138"/>
        <end position="139"/>
    </location>
</feature>
<feature type="mutagenesis site" description="Disrupts 5'-GGAG-3' motif interaction. Disrupts oligoU-addition to pre-miRNA pre-let-7 by TUT4." evidence="20">
    <original>CYNC</original>
    <variation>AYNA</variation>
    <location>
        <begin position="139"/>
        <end position="142"/>
    </location>
</feature>
<feature type="mutagenesis site" description="No effect on subcellular location; when associated with 44-C--F-47. Normal terminal myogenic differentiation; when associated with 44-C--F-47." evidence="11">
    <original>C</original>
    <variation>S</variation>
    <location>
        <position position="142"/>
    </location>
</feature>
<feature type="mutagenesis site" description="Disrupts 5'-GGAG-3' motif interaction. Binds miRNA but not TUT4." evidence="20">
    <original>CHFC</original>
    <variation>AHFA</variation>
    <location>
        <begin position="161"/>
        <end position="164"/>
    </location>
</feature>
<feature type="sequence conflict" description="In Ref. 3; AAH68304." evidence="21" ref="3">
    <original>E</original>
    <variation>D</variation>
    <location>
        <position position="194"/>
    </location>
</feature>
<feature type="strand" evidence="23">
    <location>
        <begin position="38"/>
        <end position="48"/>
    </location>
</feature>
<feature type="turn" evidence="23">
    <location>
        <begin position="49"/>
        <end position="52"/>
    </location>
</feature>
<feature type="strand" evidence="23">
    <location>
        <begin position="53"/>
        <end position="61"/>
    </location>
</feature>
<feature type="strand" evidence="23">
    <location>
        <begin position="64"/>
        <end position="75"/>
    </location>
</feature>
<feature type="helix" evidence="23">
    <location>
        <begin position="76"/>
        <end position="78"/>
    </location>
</feature>
<feature type="strand" evidence="23">
    <location>
        <begin position="81"/>
        <end position="84"/>
    </location>
</feature>
<feature type="strand" evidence="23">
    <location>
        <begin position="92"/>
        <end position="100"/>
    </location>
</feature>
<feature type="strand" evidence="23">
    <location>
        <begin position="103"/>
        <end position="111"/>
    </location>
</feature>
<feature type="helix" evidence="23">
    <location>
        <begin position="112"/>
        <end position="114"/>
    </location>
</feature>
<feature type="turn" evidence="22">
    <location>
        <begin position="124"/>
        <end position="126"/>
    </location>
</feature>
<feature type="turn" evidence="23">
    <location>
        <begin position="140"/>
        <end position="142"/>
    </location>
</feature>
<feature type="helix" evidence="23">
    <location>
        <begin position="149"/>
        <end position="151"/>
    </location>
</feature>
<feature type="turn" evidence="23">
    <location>
        <begin position="162"/>
        <end position="164"/>
    </location>
</feature>
<feature type="helix" evidence="23">
    <location>
        <begin position="171"/>
        <end position="173"/>
    </location>
</feature>
<feature type="turn" evidence="23">
    <location>
        <begin position="175"/>
        <end position="178"/>
    </location>
</feature>
<sequence>MGSVSNQQFAGGCAKAAEKAPEEAPPDAARAADEPQLLHGAGICKWFNVRMGFGFLSMTARAGVALDPPVDVFVHQSKLHMEGFRSLKEGEAVEFTFKKSAKGLESIRVTGPGGVFCIGSERRPKGKNMQKRRSKGDRCYNCGGLDHHAKECKLPPQPKKCHFCQSINHMVASCPLKAQQGPSSQGKPAYFREEEEEIHSPALLPEAQN</sequence>
<name>LN28A_MOUSE</name>
<keyword id="KW-0002">3D-structure</keyword>
<keyword id="KW-0007">Acetylation</keyword>
<keyword id="KW-0963">Cytoplasm</keyword>
<keyword id="KW-0256">Endoplasmic reticulum</keyword>
<keyword id="KW-0479">Metal-binding</keyword>
<keyword id="KW-0539">Nucleus</keyword>
<keyword id="KW-0597">Phosphoprotein</keyword>
<keyword id="KW-1185">Reference proteome</keyword>
<keyword id="KW-0677">Repeat</keyword>
<keyword id="KW-0694">RNA-binding</keyword>
<keyword id="KW-0943">RNA-mediated gene silencing</keyword>
<keyword id="KW-0862">Zinc</keyword>
<keyword id="KW-0863">Zinc-finger</keyword>
<reference key="1">
    <citation type="journal article" date="2003" name="Dev. Biol.">
        <title>Conservation of the heterochronic regulator Lin-28, its developmental expression and microRNA complementary sites.</title>
        <authorList>
            <person name="Moss E.G."/>
            <person name="Tang L."/>
        </authorList>
    </citation>
    <scope>NUCLEOTIDE SEQUENCE [MRNA]</scope>
    <scope>SUBCELLULAR LOCATION</scope>
    <scope>TISSUE SPECIFICITY</scope>
    <scope>DEVELOPMENTAL STAGE</scope>
</reference>
<reference key="2">
    <citation type="journal article" date="2003" name="Dev. Biol.">
        <authorList>
            <person name="Moss E.G."/>
            <person name="Tang L."/>
        </authorList>
    </citation>
    <scope>ERRATUM OF PUBMED:12798299</scope>
</reference>
<reference key="3">
    <citation type="journal article" date="2004" name="Genome Res.">
        <title>The status, quality, and expansion of the NIH full-length cDNA project: the Mammalian Gene Collection (MGC).</title>
        <authorList>
            <consortium name="The MGC Project Team"/>
        </authorList>
    </citation>
    <scope>NUCLEOTIDE SEQUENCE [LARGE SCALE MRNA]</scope>
    <source>
        <strain>C57BL/6J</strain>
        <tissue>Embryo</tissue>
    </source>
</reference>
<reference key="4">
    <citation type="journal article" date="2001" name="Nat. Genet.">
        <title>An abundance of X-linked genes expressed in spermatogonia.</title>
        <authorList>
            <person name="Wang P.J."/>
            <person name="McCarrey J.R."/>
            <person name="Yang F."/>
            <person name="Page D.C."/>
        </authorList>
    </citation>
    <scope>TISSUE SPECIFICITY</scope>
</reference>
<reference key="5">
    <citation type="journal article" date="2003" name="Gene Expr. Patterns">
        <title>Temporally regulated expression of Lin-28 in diverse tissues of the developing mouse.</title>
        <authorList>
            <person name="Yang D.-H."/>
            <person name="Moss E.G."/>
        </authorList>
    </citation>
    <scope>TISSUE SPECIFICITY</scope>
    <scope>DEVELOPMENTAL STAGE</scope>
</reference>
<reference key="6">
    <citation type="journal article" date="2004" name="Genome Biol.">
        <title>Expression profiling of mammalian microRNAs uncovers a subset of brain-expressed microRNAs with possible roles in murine and human neuronal differentiation.</title>
        <authorList>
            <person name="Sempere L.F."/>
            <person name="Freemantle S."/>
            <person name="Pitha-Rowe I."/>
            <person name="Moss E.G."/>
            <person name="Dmitrovsky E."/>
            <person name="Ambros V."/>
        </authorList>
    </citation>
    <scope>INDUCTION</scope>
</reference>
<reference key="7">
    <citation type="journal article" date="2005" name="J. Biol. Chem.">
        <title>Depletion of human micro-RNA miR-125b reveals that it is critical for the proliferation of differentiated cells but not for the down-regulation of putative targets during differentiation.</title>
        <authorList>
            <person name="Lee Y.S."/>
            <person name="Kim H.K."/>
            <person name="Chung S."/>
            <person name="Kim K.-S."/>
            <person name="Dutta A."/>
        </authorList>
    </citation>
    <scope>TISSUE SPECIFICITY</scope>
    <scope>DEVELOPMENTAL STAGE</scope>
</reference>
<reference key="8">
    <citation type="journal article" date="2005" name="Mol. Cell. Biol.">
        <title>Micro-RNA regulation of the mammalian lin-28 gene during neuronal differentiation of embryonal carcinoma cells.</title>
        <authorList>
            <person name="Wu L."/>
            <person name="Belasco J.G."/>
        </authorList>
    </citation>
    <scope>INDUCTION</scope>
</reference>
<reference key="9">
    <citation type="journal article" date="2007" name="Genes Dev.">
        <title>Lin-28 binds IGF-2 mRNA and participates in skeletal myogenesis by increasing translation efficiency.</title>
        <authorList>
            <person name="Polesskaya A."/>
            <person name="Cuvellier S."/>
            <person name="Naguibneva I."/>
            <person name="Duquet A."/>
            <person name="Moss E.G."/>
            <person name="Harel-Bellan A."/>
        </authorList>
    </citation>
    <scope>FUNCTION</scope>
    <scope>SUBCELLULAR LOCATION</scope>
    <scope>DEVELOPMENTAL STAGE</scope>
    <scope>INTERACTION WITH EIF3S2</scope>
    <scope>MUTAGENESIS OF GLY-42; 44-CYS--PHE-47; MET-81; ARG-85; GLY-119; PRO-124; 138-ARG-CYS-139 AND CYS-142</scope>
</reference>
<reference key="10">
    <citation type="journal article" date="2008" name="Nat. Cell Biol.">
        <title>A feedback loop comprising lin-28 and let-7 controls pre-let-7 maturation during neural stem-cell commitment.</title>
        <authorList>
            <person name="Rybak A."/>
            <person name="Fuchs H."/>
            <person name="Smirnova L."/>
            <person name="Brandt C."/>
            <person name="Pohl E.E."/>
            <person name="Nitsch R."/>
            <person name="Wulczyn F.G."/>
        </authorList>
    </citation>
    <scope>FUNCTION</scope>
    <scope>RNA-BINDING</scope>
</reference>
<reference key="11">
    <citation type="journal article" date="2008" name="RNA">
        <title>Lin-28 interaction with the Let-7 precursor loop mediates regulated microRNA processing.</title>
        <authorList>
            <person name="Newman M.A."/>
            <person name="Thomson J.M."/>
            <person name="Hammond S.M."/>
        </authorList>
    </citation>
    <scope>FUNCTION</scope>
    <scope>RNA-BINDING</scope>
</reference>
<reference key="12">
    <citation type="journal article" date="2008" name="Science">
        <title>Selective blockade of microRNA processing by Lin28.</title>
        <authorList>
            <person name="Viswanathan S.R."/>
            <person name="Daley G.Q."/>
            <person name="Gregory R.I."/>
        </authorList>
    </citation>
    <scope>FUNCTION</scope>
    <scope>RNA-BINDING</scope>
</reference>
<reference key="13">
    <citation type="journal article" date="2009" name="Cell">
        <title>TUT4 in concert with Lin28 suppresses MicroRNA biogenesis through pre-microRNA uridylation.</title>
        <authorList>
            <person name="Heo I."/>
            <person name="Joo C."/>
            <person name="Kim Y.-K."/>
            <person name="Ha M."/>
            <person name="Yoon M.-J."/>
            <person name="Cho J."/>
            <person name="Yeom K.-H."/>
            <person name="Han J."/>
            <person name="Kim V.N."/>
        </authorList>
    </citation>
    <scope>FUNCTION IN MAINTENANCE OF EMBRYONIC STEM CELL PLURIPOTENCY</scope>
</reference>
<reference key="14">
    <citation type="journal article" date="2012" name="Cell">
        <title>LIN28A is a suppressor of ER-associated translation in embryonic stem cells.</title>
        <authorList>
            <person name="Cho J."/>
            <person name="Chang H."/>
            <person name="Kwon S.C."/>
            <person name="Kim B."/>
            <person name="Kim Y."/>
            <person name="Choe J."/>
            <person name="Ha M."/>
            <person name="Kim Y.K."/>
            <person name="Kim V.N."/>
        </authorList>
    </citation>
    <scope>FUNCTION</scope>
    <scope>RNA-BINDING</scope>
    <scope>SUBCELLULAR LOCATION</scope>
</reference>
<reference key="15">
    <citation type="journal article" date="2013" name="Cell">
        <title>Lin28 enhances tissue repair by reprogramming cellular metabolism.</title>
        <authorList>
            <person name="Shyh-Chang N."/>
            <person name="Zhu H."/>
            <person name="Yvanka de Soysa T."/>
            <person name="Shinoda G."/>
            <person name="Seligson M.T."/>
            <person name="Tsanov K.M."/>
            <person name="Nguyen L."/>
            <person name="Asara J.M."/>
            <person name="Cantley L.C."/>
            <person name="Daley G.Q."/>
        </authorList>
    </citation>
    <scope>FUNCTION</scope>
</reference>
<reference key="16">
    <citation type="journal article" date="2015" name="J. Biol. Chem.">
        <title>An RNA-binding Protein, Lin28, Recognizes and Remodels G-quartets in the MicroRNAs (miRNAs) and mRNAs It Regulates.</title>
        <authorList>
            <person name="O'Day E."/>
            <person name="Le M.T."/>
            <person name="Imai S."/>
            <person name="Tan S.M."/>
            <person name="Kirchner R."/>
            <person name="Arthanari H."/>
            <person name="Hofmann O."/>
            <person name="Wagner G."/>
            <person name="Lieberman J."/>
        </authorList>
    </citation>
    <scope>FUNCTION</scope>
</reference>
<reference key="17">
    <citation type="journal article" date="2017" name="Nat. Struct. Mol. Biol.">
        <title>Multi-domain utilization by TUT4 and TUT7 in control of let-7 biogenesis.</title>
        <authorList>
            <person name="Faehnle C.R."/>
            <person name="Walleshauser J."/>
            <person name="Joshua-Tor L."/>
        </authorList>
    </citation>
    <scope>FUNCTION</scope>
    <scope>INTERACTION WITH TUT4</scope>
    <scope>RNA-BINDING</scope>
    <scope>DOMAIN</scope>
    <scope>MUTAGENESIS OF 139-CYS--CYS-142 AND 161-CYS--CYS-164</scope>
</reference>
<reference key="18">
    <citation type="journal article" date="2011" name="Cell">
        <title>Molecular basis for interaction of let-7 microRNAs with Lin28.</title>
        <authorList>
            <person name="Nam Y."/>
            <person name="Chen C."/>
            <person name="Gregory R.I."/>
            <person name="Chou J.J."/>
            <person name="Sliz P."/>
        </authorList>
    </citation>
    <scope>X-RAY CRYSTALLOGRAPHY (2.01 ANGSTROMS) OF 31-187 IN COMPLEX WITH LET-7 RNA PRECURSORS</scope>
    <scope>DOMAINS</scope>
    <scope>SUBUNIT</scope>
</reference>
<dbReference type="EMBL" id="AF521097">
    <property type="protein sequence ID" value="AAM77749.1"/>
    <property type="molecule type" value="mRNA"/>
</dbReference>
<dbReference type="EMBL" id="BC068304">
    <property type="protein sequence ID" value="AAH68304.1"/>
    <property type="molecule type" value="mRNA"/>
</dbReference>
<dbReference type="CCDS" id="CCDS18761.1"/>
<dbReference type="RefSeq" id="NP_665832.1">
    <property type="nucleotide sequence ID" value="NM_145833.1"/>
</dbReference>
<dbReference type="PDB" id="3TRZ">
    <property type="method" value="X-ray"/>
    <property type="resolution" value="2.90 A"/>
    <property type="chains" value="A/B/C/D/E/F=31-187"/>
</dbReference>
<dbReference type="PDB" id="3TS0">
    <property type="method" value="X-ray"/>
    <property type="resolution" value="2.76 A"/>
    <property type="chains" value="A/B=33-187"/>
</dbReference>
<dbReference type="PDB" id="3TS2">
    <property type="method" value="X-ray"/>
    <property type="resolution" value="2.01 A"/>
    <property type="chains" value="A/B=31-187"/>
</dbReference>
<dbReference type="PDBsum" id="3TRZ"/>
<dbReference type="PDBsum" id="3TS0"/>
<dbReference type="PDBsum" id="3TS2"/>
<dbReference type="SMR" id="Q8K3Y3"/>
<dbReference type="BioGRID" id="219943">
    <property type="interactions" value="11"/>
</dbReference>
<dbReference type="DIP" id="DIP-48573N"/>
<dbReference type="FunCoup" id="Q8K3Y3">
    <property type="interactions" value="335"/>
</dbReference>
<dbReference type="IntAct" id="Q8K3Y3">
    <property type="interactions" value="17"/>
</dbReference>
<dbReference type="STRING" id="10090.ENSMUSP00000050488"/>
<dbReference type="BindingDB" id="Q8K3Y3"/>
<dbReference type="ChEMBL" id="CHEMBL4295897"/>
<dbReference type="iPTMnet" id="Q8K3Y3"/>
<dbReference type="PhosphoSitePlus" id="Q8K3Y3"/>
<dbReference type="PaxDb" id="10090-ENSMUSP00000050488"/>
<dbReference type="PeptideAtlas" id="Q8K3Y3"/>
<dbReference type="ProteomicsDB" id="292109"/>
<dbReference type="Antibodypedia" id="30634">
    <property type="antibodies" value="741 antibodies from 44 providers"/>
</dbReference>
<dbReference type="DNASU" id="83557"/>
<dbReference type="Ensembl" id="ENSMUST00000051674.3">
    <property type="protein sequence ID" value="ENSMUSP00000050488.3"/>
    <property type="gene ID" value="ENSMUSG00000050966.10"/>
</dbReference>
<dbReference type="GeneID" id="83557"/>
<dbReference type="KEGG" id="mmu:83557"/>
<dbReference type="UCSC" id="uc008vdw.1">
    <property type="organism name" value="mouse"/>
</dbReference>
<dbReference type="AGR" id="MGI:1890546"/>
<dbReference type="CTD" id="79727"/>
<dbReference type="MGI" id="MGI:1890546">
    <property type="gene designation" value="Lin28a"/>
</dbReference>
<dbReference type="VEuPathDB" id="HostDB:ENSMUSG00000050966"/>
<dbReference type="eggNOG" id="KOG3070">
    <property type="taxonomic scope" value="Eukaryota"/>
</dbReference>
<dbReference type="GeneTree" id="ENSGT00940000153295"/>
<dbReference type="HOGENOM" id="CLU_089169_4_0_1"/>
<dbReference type="InParanoid" id="Q8K3Y3"/>
<dbReference type="OMA" id="NEPQPLH"/>
<dbReference type="OrthoDB" id="422005at2759"/>
<dbReference type="PhylomeDB" id="Q8K3Y3"/>
<dbReference type="TreeFam" id="TF316240"/>
<dbReference type="BioGRID-ORCS" id="83557">
    <property type="hits" value="1 hit in 80 CRISPR screens"/>
</dbReference>
<dbReference type="CD-CODE" id="5E82D60E">
    <property type="entry name" value="Nucleolus"/>
</dbReference>
<dbReference type="EvolutionaryTrace" id="Q8K3Y3"/>
<dbReference type="PRO" id="PR:Q8K3Y3"/>
<dbReference type="Proteomes" id="UP000000589">
    <property type="component" value="Chromosome 4"/>
</dbReference>
<dbReference type="RNAct" id="Q8K3Y3">
    <property type="molecule type" value="protein"/>
</dbReference>
<dbReference type="Bgee" id="ENSMUSG00000050966">
    <property type="expression patterns" value="Expressed in primitive streak and 78 other cell types or tissues"/>
</dbReference>
<dbReference type="ExpressionAtlas" id="Q8K3Y3">
    <property type="expression patterns" value="baseline and differential"/>
</dbReference>
<dbReference type="GO" id="GO:0005737">
    <property type="term" value="C:cytoplasm"/>
    <property type="evidence" value="ECO:0000314"/>
    <property type="project" value="MGI"/>
</dbReference>
<dbReference type="GO" id="GO:0010494">
    <property type="term" value="C:cytoplasmic stress granule"/>
    <property type="evidence" value="ECO:0000250"/>
    <property type="project" value="UniProtKB"/>
</dbReference>
<dbReference type="GO" id="GO:0005829">
    <property type="term" value="C:cytosol"/>
    <property type="evidence" value="ECO:0007669"/>
    <property type="project" value="Ensembl"/>
</dbReference>
<dbReference type="GO" id="GO:0005730">
    <property type="term" value="C:nucleolus"/>
    <property type="evidence" value="ECO:0000314"/>
    <property type="project" value="MGI"/>
</dbReference>
<dbReference type="GO" id="GO:0005634">
    <property type="term" value="C:nucleus"/>
    <property type="evidence" value="ECO:0000250"/>
    <property type="project" value="UniProtKB"/>
</dbReference>
<dbReference type="GO" id="GO:0000932">
    <property type="term" value="C:P-body"/>
    <property type="evidence" value="ECO:0000250"/>
    <property type="project" value="UniProtKB"/>
</dbReference>
<dbReference type="GO" id="GO:0005791">
    <property type="term" value="C:rough endoplasmic reticulum"/>
    <property type="evidence" value="ECO:0000314"/>
    <property type="project" value="UniProtKB"/>
</dbReference>
<dbReference type="GO" id="GO:0002151">
    <property type="term" value="F:G-quadruplex RNA binding"/>
    <property type="evidence" value="ECO:0000314"/>
    <property type="project" value="UniProtKB"/>
</dbReference>
<dbReference type="GO" id="GO:0035198">
    <property type="term" value="F:miRNA binding"/>
    <property type="evidence" value="ECO:0000314"/>
    <property type="project" value="UniProtKB"/>
</dbReference>
<dbReference type="GO" id="GO:0003729">
    <property type="term" value="F:mRNA binding"/>
    <property type="evidence" value="ECO:0000314"/>
    <property type="project" value="MGI"/>
</dbReference>
<dbReference type="GO" id="GO:0070883">
    <property type="term" value="F:pre-miRNA binding"/>
    <property type="evidence" value="ECO:0007669"/>
    <property type="project" value="Ensembl"/>
</dbReference>
<dbReference type="GO" id="GO:0140517">
    <property type="term" value="F:protein-RNA adaptor activity"/>
    <property type="evidence" value="ECO:0007669"/>
    <property type="project" value="Ensembl"/>
</dbReference>
<dbReference type="GO" id="GO:0003723">
    <property type="term" value="F:RNA binding"/>
    <property type="evidence" value="ECO:0000314"/>
    <property type="project" value="UniProtKB"/>
</dbReference>
<dbReference type="GO" id="GO:1990825">
    <property type="term" value="F:sequence-specific mRNA binding"/>
    <property type="evidence" value="ECO:0000314"/>
    <property type="project" value="UniProtKB"/>
</dbReference>
<dbReference type="GO" id="GO:0031369">
    <property type="term" value="F:translation initiation factor binding"/>
    <property type="evidence" value="ECO:0000353"/>
    <property type="project" value="MGI"/>
</dbReference>
<dbReference type="GO" id="GO:0008270">
    <property type="term" value="F:zinc ion binding"/>
    <property type="evidence" value="ECO:0007669"/>
    <property type="project" value="UniProtKB-KW"/>
</dbReference>
<dbReference type="GO" id="GO:0071333">
    <property type="term" value="P:cellular response to glucose stimulus"/>
    <property type="evidence" value="ECO:0000315"/>
    <property type="project" value="BHF-UCL"/>
</dbReference>
<dbReference type="GO" id="GO:0007281">
    <property type="term" value="P:germ cell development"/>
    <property type="evidence" value="ECO:0000315"/>
    <property type="project" value="MGI"/>
</dbReference>
<dbReference type="GO" id="GO:0010587">
    <property type="term" value="P:miRNA catabolic process"/>
    <property type="evidence" value="ECO:0000314"/>
    <property type="project" value="BHF-UCL"/>
</dbReference>
<dbReference type="GO" id="GO:0010586">
    <property type="term" value="P:miRNA metabolic process"/>
    <property type="evidence" value="ECO:0000314"/>
    <property type="project" value="MGI"/>
</dbReference>
<dbReference type="GO" id="GO:0045686">
    <property type="term" value="P:negative regulation of glial cell differentiation"/>
    <property type="evidence" value="ECO:0000314"/>
    <property type="project" value="MGI"/>
</dbReference>
<dbReference type="GO" id="GO:2000632">
    <property type="term" value="P:negative regulation of pre-miRNA processing"/>
    <property type="evidence" value="ECO:0007669"/>
    <property type="project" value="Ensembl"/>
</dbReference>
<dbReference type="GO" id="GO:0017148">
    <property type="term" value="P:negative regulation of translation"/>
    <property type="evidence" value="ECO:0000314"/>
    <property type="project" value="UniProtKB"/>
</dbReference>
<dbReference type="GO" id="GO:1901724">
    <property type="term" value="P:positive regulation of cell proliferation involved in kidney development"/>
    <property type="evidence" value="ECO:0000315"/>
    <property type="project" value="BHF-UCL"/>
</dbReference>
<dbReference type="GO" id="GO:2000767">
    <property type="term" value="P:positive regulation of cytoplasmic translation"/>
    <property type="evidence" value="ECO:0000250"/>
    <property type="project" value="UniProtKB"/>
</dbReference>
<dbReference type="GO" id="GO:0045666">
    <property type="term" value="P:positive regulation of neuron differentiation"/>
    <property type="evidence" value="ECO:0000314"/>
    <property type="project" value="MGI"/>
</dbReference>
<dbReference type="GO" id="GO:0051897">
    <property type="term" value="P:positive regulation of phosphatidylinositol 3-kinase/protein kinase B signal transduction"/>
    <property type="evidence" value="ECO:0000314"/>
    <property type="project" value="BHF-UCL"/>
</dbReference>
<dbReference type="GO" id="GO:0032008">
    <property type="term" value="P:positive regulation of TOR signaling"/>
    <property type="evidence" value="ECO:0000314"/>
    <property type="project" value="BHF-UCL"/>
</dbReference>
<dbReference type="GO" id="GO:0045727">
    <property type="term" value="P:positive regulation of translation"/>
    <property type="evidence" value="ECO:0000314"/>
    <property type="project" value="MGI"/>
</dbReference>
<dbReference type="GO" id="GO:0031054">
    <property type="term" value="P:pre-miRNA processing"/>
    <property type="evidence" value="ECO:0000314"/>
    <property type="project" value="MGI"/>
</dbReference>
<dbReference type="GO" id="GO:0060964">
    <property type="term" value="P:regulation of miRNA-mediated gene silencing"/>
    <property type="evidence" value="ECO:0000316"/>
    <property type="project" value="MGI"/>
</dbReference>
<dbReference type="GO" id="GO:0031123">
    <property type="term" value="P:RNA 3'-end processing"/>
    <property type="evidence" value="ECO:0007669"/>
    <property type="project" value="Ensembl"/>
</dbReference>
<dbReference type="GO" id="GO:0048863">
    <property type="term" value="P:stem cell differentiation"/>
    <property type="evidence" value="ECO:0000315"/>
    <property type="project" value="UniProtKB"/>
</dbReference>
<dbReference type="GO" id="GO:0019827">
    <property type="term" value="P:stem cell population maintenance"/>
    <property type="evidence" value="ECO:0007669"/>
    <property type="project" value="Ensembl"/>
</dbReference>
<dbReference type="CDD" id="cd04458">
    <property type="entry name" value="CSP_CDS"/>
    <property type="match status" value="1"/>
</dbReference>
<dbReference type="FunFam" id="4.10.60.10:FF:000007">
    <property type="entry name" value="Protein lin-28 homolog A"/>
    <property type="match status" value="1"/>
</dbReference>
<dbReference type="FunFam" id="2.40.50.140:FF:000087">
    <property type="entry name" value="Protein lin-28 homolog B"/>
    <property type="match status" value="1"/>
</dbReference>
<dbReference type="Gene3D" id="2.40.50.140">
    <property type="entry name" value="Nucleic acid-binding proteins"/>
    <property type="match status" value="1"/>
</dbReference>
<dbReference type="Gene3D" id="4.10.60.10">
    <property type="entry name" value="Zinc finger, CCHC-type"/>
    <property type="match status" value="1"/>
</dbReference>
<dbReference type="InterPro" id="IPR011129">
    <property type="entry name" value="CSD"/>
</dbReference>
<dbReference type="InterPro" id="IPR002059">
    <property type="entry name" value="CSP_DNA-bd"/>
</dbReference>
<dbReference type="InterPro" id="IPR051373">
    <property type="entry name" value="Lin-28_RNA-binding"/>
</dbReference>
<dbReference type="InterPro" id="IPR054081">
    <property type="entry name" value="Lin-28A-like_Znf-CCHC_2"/>
</dbReference>
<dbReference type="InterPro" id="IPR012340">
    <property type="entry name" value="NA-bd_OB-fold"/>
</dbReference>
<dbReference type="InterPro" id="IPR001878">
    <property type="entry name" value="Znf_CCHC"/>
</dbReference>
<dbReference type="InterPro" id="IPR036875">
    <property type="entry name" value="Znf_CCHC_sf"/>
</dbReference>
<dbReference type="PANTHER" id="PTHR46109">
    <property type="entry name" value="PROTEIN LIN-28"/>
    <property type="match status" value="1"/>
</dbReference>
<dbReference type="PANTHER" id="PTHR46109:SF2">
    <property type="entry name" value="PROTEIN LIN-28 HOMOLOG A"/>
    <property type="match status" value="1"/>
</dbReference>
<dbReference type="Pfam" id="PF00313">
    <property type="entry name" value="CSD"/>
    <property type="match status" value="1"/>
</dbReference>
<dbReference type="Pfam" id="PF21890">
    <property type="entry name" value="Lin-28A-like_zf-CCHC_2"/>
    <property type="match status" value="1"/>
</dbReference>
<dbReference type="Pfam" id="PF00098">
    <property type="entry name" value="zf-CCHC"/>
    <property type="match status" value="1"/>
</dbReference>
<dbReference type="PRINTS" id="PR00050">
    <property type="entry name" value="COLDSHOCK"/>
</dbReference>
<dbReference type="SMART" id="SM00357">
    <property type="entry name" value="CSP"/>
    <property type="match status" value="1"/>
</dbReference>
<dbReference type="SMART" id="SM00343">
    <property type="entry name" value="ZnF_C2HC"/>
    <property type="match status" value="2"/>
</dbReference>
<dbReference type="SUPFAM" id="SSF50249">
    <property type="entry name" value="Nucleic acid-binding proteins"/>
    <property type="match status" value="1"/>
</dbReference>
<dbReference type="SUPFAM" id="SSF57756">
    <property type="entry name" value="Retrovirus zinc finger-like domains"/>
    <property type="match status" value="1"/>
</dbReference>
<dbReference type="PROSITE" id="PS51857">
    <property type="entry name" value="CSD_2"/>
    <property type="match status" value="1"/>
</dbReference>
<dbReference type="PROSITE" id="PS50158">
    <property type="entry name" value="ZF_CCHC"/>
    <property type="match status" value="1"/>
</dbReference>
<protein>
    <recommendedName>
        <fullName>Protein lin-28 homolog A</fullName>
        <shortName>Lin-28A</shortName>
    </recommendedName>
    <alternativeName>
        <fullName>Testis-expressed protein 17</fullName>
    </alternativeName>
</protein>
<comment type="function">
    <text evidence="11 12 13 14 15 17 18 19 20">RNA-binding protein that inhibits processing of pre-let-7 miRNAs and regulates translation of mRNAs that control developmental timing, pluripotency and metabolism (PubMed:17473174, PubMed:18292307, PubMed:18566191, PubMed:18604195, PubMed:19703396, PubMed:23102813, PubMed:24209617). Seems to recognize a common structural G-quartet (G4) feature in its miRNA and mRNA targets (PubMed:26045559). 'Translational enhancer' that drives specific mRNAs to polysomes and increases the efficiency of protein synthesis. Its association with the translational machinery and target mRNAs results in an increased number of initiation events per molecule of mRNA and, indirectly, in mRNA stabilization. Binds IGF2 mRNA, MYOD1 mRNA, ARBP/36B4 ribosomal protein mRNA and its own mRNA. Essential for skeletal muscle differentiation program through the translational up-regulation of IGF2 expression (PubMed:17473174). Suppressor of microRNA (miRNA) biogenesis, including that of let-7, miR107, miR-143 and miR-200c. Specifically binds the miRNA precursors (pre-miRNAs), recognizing an 5'-GGAG-3' motif found in pre-miRNA terminal loop, and recruits TUT4 and TUT7 uridylyltransferaseS. This results in the terminal uridylation of target pre-miRNAs. Uridylated pre-miRNAs fail to be processed by Dicer and undergo degradation. The repression of let-7 expression is required for normal development and contributes to maintain the pluripotent state by preventing let-7-mediated differentiation of embryonic stem cells (PubMed:19703396, PubMed:28671666). Localized to the periendoplasmic reticulum area, binds to a large number of spliced mRNAs and inhibits the translation of mRNAs destined for the ER, reducing the synthesis of transmembrane proteins, ER or Golgi lumen proteins, and secretory proteins (PubMed:23102813). Binds to and enhances the translation of mRNAs for several metabolic enzymes, such as PFKP, PDHA1 or SDHA, increasing glycolysis and oxidative phosphorylation. Which, with the let-7 repression may enhance tissue repair in adult tissue (PubMed:24209617).</text>
</comment>
<comment type="subunit">
    <text evidence="1 2 11 16 20">Monomer (PubMed:22078496). During skeletal muscle differentiation, associated with translation initiation complexes in the polysomal compartment (By similarity). Directly interacts with EIF3S2 (PubMed:17473174). Interacts with NCL in an RNA-dependent manner (By similarity). Interacts with TUT4 in the presence of pre-let-7 RNA (PubMed:28671666).</text>
</comment>
<comment type="interaction">
    <interactant intactId="EBI-11109197">
        <id>Q8K3Y3</id>
    </interactant>
    <interactant intactId="EBI-16045218">
        <id>Q8CI75</id>
        <label>Dis3l2</label>
    </interactant>
    <organismsDiffer>false</organismsDiffer>
    <experiments>2</experiments>
</comment>
<comment type="subcellular location">
    <subcellularLocation>
        <location evidence="6 11">Cytoplasm</location>
    </subcellularLocation>
    <subcellularLocation>
        <location evidence="17">Rough endoplasmic reticulum</location>
    </subcellularLocation>
    <subcellularLocation>
        <location evidence="2">Cytoplasm</location>
        <location evidence="2">P-body</location>
    </subcellularLocation>
    <subcellularLocation>
        <location evidence="11">Cytoplasm</location>
        <location evidence="11">Stress granule</location>
    </subcellularLocation>
    <subcellularLocation>
        <location evidence="11">Nucleus</location>
        <location evidence="11">Nucleolus</location>
    </subcellularLocation>
    <text evidence="6 11 17">Predominantly cytoplasmic (PubMed:12798299). In the cytoplasm, localizes to peri-endoplasmic reticulum regions and detected in the microsomal fraction derived from rough endoplasmic reticulum (RER) following subcellular fractionation. May be bound to the cytosolic surface of RER on which ER-associated mRNAs are translated (PubMed:23102813). Shuttle from the nucleus to the cytoplasm requires RNA-binding (PubMed:17473174). Nucleolar localization observed in 10-15% of the nuclei in differentiated myotubes (PubMed:17473174).</text>
</comment>
<comment type="tissue specificity">
    <text evidence="5 6 7 9">Expressed in embryonic stem cells (ES cells), spermatagonia and testis. Expressed in numerous epithelial tissues including the epithelia of the small intestine, the intralobular duct epithelium of the mammary gland and the epithelia of Henle's loop in the kidney and in the collecting duct (at protein level). Also expressed in the myocardium and skeletal muscle (at protein level).</text>
</comment>
<comment type="developmental stage">
    <text evidence="6 7 9 11">Strongly expressed throughout the whole embryo at 6.5 dpc, including the embryonic and extraembryonic ectoderm and endoderm (at protein level). Subsequently expressed in the ectoderm, endoderm and mesoderm at 7.5 dpc (at protein level). At 9.5 dpc, expressed in epithelia covering the first branchial arch and the coelomic cavity, the myocardium of the developing heart, the neuroepithelium and some extraembryonic tissues such as the visceral yolk sac (at protein level). Expression persists in a variety of epithelial tissues at 10.5 dpc. At 15.5 dpc, expression is lost in bronchial epithelium and becomes weaker in neuroepithelium, while increasing in the myotome of somites, the foregut epithelium, stratified epithelium and some kidney tubules (at protein level). At 17.5 dpc, expression persists in the myocardium and in the epithelium covering the body surface and skeletal muscles (at protein level). Expression is reduced during differentiation of ES cells. In adult primary myoblasts, barely detectable during proliferation, but dramatically up-regulated during terminal differentiation. Induced as early as 24 hours after differentiation signal and remains high as late as 7 days of differentiation. Little expression in resting muscle, but strongly up-regulated during regeneration of skeletal muscle fibers. Expression decreases when regeneration is histologically and functionally complete.</text>
</comment>
<comment type="induction">
    <text evidence="8 10">Negatively regulated by the microRNA miR-125b in response to retinoic acid.</text>
</comment>
<comment type="domain">
    <text evidence="16">The CSD domain is required for function in muscle differentiation.</text>
</comment>
<comment type="domain">
    <text evidence="16 20">The CCHC zinc fingers interact with the GGAG motif at the 3' end of let-7 miRNAs precursors, more generally they bind the 5'-NGNNG-3' consensus motif with micromolar affinity. The CSD domain recognizes the loop at the 5' end. The flexible linker allows accommodating variable sequences and lengths among let-7 family members.</text>
</comment>
<comment type="miscellaneous">
    <text evidence="18">Reactivation of LIN28A expression enhances tissue repair in some adult tissues by reprogramming cellular bioenergetics. Improves hair regrowth by promoting anagen in hair follicle and accelerates regrowth of cartilage, bone and mesenchyme after ear and digit injuries.</text>
</comment>
<comment type="similarity">
    <text evidence="21">Belongs to the lin-28 family.</text>
</comment>
<evidence type="ECO:0000250" key="1"/>
<evidence type="ECO:0000250" key="2">
    <source>
        <dbReference type="UniProtKB" id="Q9H9Z2"/>
    </source>
</evidence>
<evidence type="ECO:0000255" key="3">
    <source>
        <dbReference type="PROSITE-ProRule" id="PRU00047"/>
    </source>
</evidence>
<evidence type="ECO:0000256" key="4">
    <source>
        <dbReference type="SAM" id="MobiDB-lite"/>
    </source>
</evidence>
<evidence type="ECO:0000269" key="5">
    <source>
    </source>
</evidence>
<evidence type="ECO:0000269" key="6">
    <source>
    </source>
</evidence>
<evidence type="ECO:0000269" key="7">
    <source>
    </source>
</evidence>
<evidence type="ECO:0000269" key="8">
    <source>
    </source>
</evidence>
<evidence type="ECO:0000269" key="9">
    <source>
    </source>
</evidence>
<evidence type="ECO:0000269" key="10">
    <source>
    </source>
</evidence>
<evidence type="ECO:0000269" key="11">
    <source>
    </source>
</evidence>
<evidence type="ECO:0000269" key="12">
    <source>
    </source>
</evidence>
<evidence type="ECO:0000269" key="13">
    <source>
    </source>
</evidence>
<evidence type="ECO:0000269" key="14">
    <source>
    </source>
</evidence>
<evidence type="ECO:0000269" key="15">
    <source>
    </source>
</evidence>
<evidence type="ECO:0000269" key="16">
    <source>
    </source>
</evidence>
<evidence type="ECO:0000269" key="17">
    <source>
    </source>
</evidence>
<evidence type="ECO:0000269" key="18">
    <source>
    </source>
</evidence>
<evidence type="ECO:0000269" key="19">
    <source>
    </source>
</evidence>
<evidence type="ECO:0000269" key="20">
    <source>
    </source>
</evidence>
<evidence type="ECO:0000305" key="21"/>
<evidence type="ECO:0007829" key="22">
    <source>
        <dbReference type="PDB" id="3TS0"/>
    </source>
</evidence>
<evidence type="ECO:0007829" key="23">
    <source>
        <dbReference type="PDB" id="3TS2"/>
    </source>
</evidence>
<gene>
    <name type="primary">Lin28a</name>
    <name type="synonym">Lin28</name>
    <name type="synonym">Tex17</name>
</gene>
<accession>Q8K3Y3</accession>
<accession>Q6NV62</accession>